<keyword id="KW-0963">Cytoplasm</keyword>
<keyword id="KW-0238">DNA-binding</keyword>
<keyword id="KW-0677">Repeat</keyword>
<keyword id="KW-0678">Repressor</keyword>
<keyword id="KW-0804">Transcription</keyword>
<keyword id="KW-0805">Transcription regulation</keyword>
<evidence type="ECO:0000255" key="1">
    <source>
        <dbReference type="HAMAP-Rule" id="MF_01008"/>
    </source>
</evidence>
<evidence type="ECO:0000255" key="2">
    <source>
        <dbReference type="PROSITE-ProRule" id="PRU01076"/>
    </source>
</evidence>
<reference key="1">
    <citation type="submission" date="2008-02" db="EMBL/GenBank/DDBJ databases">
        <title>Complete sequence of Yersinia pseudotuberculosis YPIII.</title>
        <authorList>
            <consortium name="US DOE Joint Genome Institute"/>
            <person name="Copeland A."/>
            <person name="Lucas S."/>
            <person name="Lapidus A."/>
            <person name="Glavina del Rio T."/>
            <person name="Dalin E."/>
            <person name="Tice H."/>
            <person name="Bruce D."/>
            <person name="Goodwin L."/>
            <person name="Pitluck S."/>
            <person name="Munk A.C."/>
            <person name="Brettin T."/>
            <person name="Detter J.C."/>
            <person name="Han C."/>
            <person name="Tapia R."/>
            <person name="Schmutz J."/>
            <person name="Larimer F."/>
            <person name="Land M."/>
            <person name="Hauser L."/>
            <person name="Challacombe J.F."/>
            <person name="Green L."/>
            <person name="Lindler L.E."/>
            <person name="Nikolich M.P."/>
            <person name="Richardson P."/>
        </authorList>
    </citation>
    <scope>NUCLEOTIDE SEQUENCE [LARGE SCALE GENOMIC DNA]</scope>
    <source>
        <strain>YPIII</strain>
    </source>
</reference>
<organism>
    <name type="scientific">Yersinia pseudotuberculosis serotype O:3 (strain YPIII)</name>
    <dbReference type="NCBI Taxonomy" id="502800"/>
    <lineage>
        <taxon>Bacteria</taxon>
        <taxon>Pseudomonadati</taxon>
        <taxon>Pseudomonadota</taxon>
        <taxon>Gammaproteobacteria</taxon>
        <taxon>Enterobacterales</taxon>
        <taxon>Yersiniaceae</taxon>
        <taxon>Yersinia</taxon>
    </lineage>
</organism>
<dbReference type="EMBL" id="CP000950">
    <property type="protein sequence ID" value="ACA69794.1"/>
    <property type="molecule type" value="Genomic_DNA"/>
</dbReference>
<dbReference type="RefSeq" id="WP_011191730.1">
    <property type="nucleotide sequence ID" value="NZ_CP009792.1"/>
</dbReference>
<dbReference type="SMR" id="B1JK90"/>
<dbReference type="GeneID" id="49787316"/>
<dbReference type="KEGG" id="ypy:YPK_3527"/>
<dbReference type="PATRIC" id="fig|502800.11.peg.4270"/>
<dbReference type="GO" id="GO:0005737">
    <property type="term" value="C:cytoplasm"/>
    <property type="evidence" value="ECO:0007669"/>
    <property type="project" value="UniProtKB-UniRule"/>
</dbReference>
<dbReference type="GO" id="GO:0009295">
    <property type="term" value="C:nucleoid"/>
    <property type="evidence" value="ECO:0007669"/>
    <property type="project" value="UniProtKB-SubCell"/>
</dbReference>
<dbReference type="GO" id="GO:0003700">
    <property type="term" value="F:DNA-binding transcription factor activity"/>
    <property type="evidence" value="ECO:0007669"/>
    <property type="project" value="UniProtKB-UniRule"/>
</dbReference>
<dbReference type="GO" id="GO:0000976">
    <property type="term" value="F:transcription cis-regulatory region binding"/>
    <property type="evidence" value="ECO:0007669"/>
    <property type="project" value="TreeGrafter"/>
</dbReference>
<dbReference type="GO" id="GO:2000143">
    <property type="term" value="P:negative regulation of DNA-templated transcription initiation"/>
    <property type="evidence" value="ECO:0007669"/>
    <property type="project" value="TreeGrafter"/>
</dbReference>
<dbReference type="CDD" id="cd16321">
    <property type="entry name" value="MraZ_C"/>
    <property type="match status" value="1"/>
</dbReference>
<dbReference type="CDD" id="cd16320">
    <property type="entry name" value="MraZ_N"/>
    <property type="match status" value="1"/>
</dbReference>
<dbReference type="FunFam" id="3.40.1550.20:FF:000001">
    <property type="entry name" value="Transcriptional regulator MraZ"/>
    <property type="match status" value="1"/>
</dbReference>
<dbReference type="Gene3D" id="3.40.1550.20">
    <property type="entry name" value="Transcriptional regulator MraZ domain"/>
    <property type="match status" value="1"/>
</dbReference>
<dbReference type="HAMAP" id="MF_01008">
    <property type="entry name" value="MraZ"/>
    <property type="match status" value="1"/>
</dbReference>
<dbReference type="InterPro" id="IPR003444">
    <property type="entry name" value="MraZ"/>
</dbReference>
<dbReference type="InterPro" id="IPR035644">
    <property type="entry name" value="MraZ_C"/>
</dbReference>
<dbReference type="InterPro" id="IPR020603">
    <property type="entry name" value="MraZ_dom"/>
</dbReference>
<dbReference type="InterPro" id="IPR035642">
    <property type="entry name" value="MraZ_N"/>
</dbReference>
<dbReference type="InterPro" id="IPR038619">
    <property type="entry name" value="MraZ_sf"/>
</dbReference>
<dbReference type="InterPro" id="IPR007159">
    <property type="entry name" value="SpoVT-AbrB_dom"/>
</dbReference>
<dbReference type="InterPro" id="IPR037914">
    <property type="entry name" value="SpoVT-AbrB_sf"/>
</dbReference>
<dbReference type="NCBIfam" id="TIGR00242">
    <property type="entry name" value="division/cell wall cluster transcriptional repressor MraZ"/>
    <property type="match status" value="1"/>
</dbReference>
<dbReference type="PANTHER" id="PTHR34701">
    <property type="entry name" value="TRANSCRIPTIONAL REGULATOR MRAZ"/>
    <property type="match status" value="1"/>
</dbReference>
<dbReference type="PANTHER" id="PTHR34701:SF1">
    <property type="entry name" value="TRANSCRIPTIONAL REGULATOR MRAZ"/>
    <property type="match status" value="1"/>
</dbReference>
<dbReference type="Pfam" id="PF02381">
    <property type="entry name" value="MraZ"/>
    <property type="match status" value="2"/>
</dbReference>
<dbReference type="SUPFAM" id="SSF89447">
    <property type="entry name" value="AbrB/MazE/MraZ-like"/>
    <property type="match status" value="1"/>
</dbReference>
<dbReference type="PROSITE" id="PS51740">
    <property type="entry name" value="SPOVT_ABRB"/>
    <property type="match status" value="2"/>
</dbReference>
<accession>B1JK90</accession>
<gene>
    <name evidence="1" type="primary">mraZ</name>
    <name type="ordered locus">YPK_3527</name>
</gene>
<proteinExistence type="inferred from homology"/>
<sequence length="152" mass="17472">MFRGATMVNLDSKGRLAVPTRYRESLNEESQGQMVCTIDLHQPCLLLYPLPEWEIIEQKLSRLSSMNPAERRVQRLLLGHASECQMDGAGRLLIAGTLRQHAGLNKEVMLVGQFNKFELWDEQTWYQQVKDDIDAEQSTQEPLSERLQDLSL</sequence>
<protein>
    <recommendedName>
        <fullName>Transcriptional regulator MraZ</fullName>
    </recommendedName>
</protein>
<name>MRAZ_YERPY</name>
<feature type="chain" id="PRO_1000191346" description="Transcriptional regulator MraZ">
    <location>
        <begin position="1"/>
        <end position="152"/>
    </location>
</feature>
<feature type="domain" description="SpoVT-AbrB 1" evidence="2">
    <location>
        <begin position="5"/>
        <end position="52"/>
    </location>
</feature>
<feature type="domain" description="SpoVT-AbrB 2" evidence="2">
    <location>
        <begin position="81"/>
        <end position="124"/>
    </location>
</feature>
<comment type="function">
    <text evidence="1">Negatively regulates its own expression and that of the subsequent genes in the proximal part of the division and cell wall (dcw) gene cluster. Acts by binding directly to DNA. May also regulate the expression of genes outside the dcw cluster.</text>
</comment>
<comment type="subunit">
    <text evidence="1">Forms oligomers.</text>
</comment>
<comment type="subcellular location">
    <subcellularLocation>
        <location evidence="1">Cytoplasm</location>
        <location evidence="1">Nucleoid</location>
    </subcellularLocation>
</comment>
<comment type="similarity">
    <text evidence="1">Belongs to the MraZ family.</text>
</comment>